<evidence type="ECO:0000255" key="1">
    <source>
        <dbReference type="HAMAP-Rule" id="MF_00909"/>
    </source>
</evidence>
<evidence type="ECO:0000269" key="2">
    <source>
    </source>
</evidence>
<evidence type="ECO:0000269" key="3">
    <source>
    </source>
</evidence>
<evidence type="ECO:0000269" key="4">
    <source>
    </source>
</evidence>
<evidence type="ECO:0007829" key="5">
    <source>
        <dbReference type="PDB" id="1W58"/>
    </source>
</evidence>
<evidence type="ECO:0007829" key="6">
    <source>
        <dbReference type="PDB" id="1W59"/>
    </source>
</evidence>
<evidence type="ECO:0007829" key="7">
    <source>
        <dbReference type="PDB" id="1W5B"/>
    </source>
</evidence>
<evidence type="ECO:0007829" key="8">
    <source>
        <dbReference type="PDB" id="2VAP"/>
    </source>
</evidence>
<reference key="1">
    <citation type="journal article" date="1996" name="Science">
        <title>Complete genome sequence of the methanogenic archaeon, Methanococcus jannaschii.</title>
        <authorList>
            <person name="Bult C.J."/>
            <person name="White O."/>
            <person name="Olsen G.J."/>
            <person name="Zhou L."/>
            <person name="Fleischmann R.D."/>
            <person name="Sutton G.G."/>
            <person name="Blake J.A."/>
            <person name="FitzGerald L.M."/>
            <person name="Clayton R.A."/>
            <person name="Gocayne J.D."/>
            <person name="Kerlavage A.R."/>
            <person name="Dougherty B.A."/>
            <person name="Tomb J.-F."/>
            <person name="Adams M.D."/>
            <person name="Reich C.I."/>
            <person name="Overbeek R."/>
            <person name="Kirkness E.F."/>
            <person name="Weinstock K.G."/>
            <person name="Merrick J.M."/>
            <person name="Glodek A."/>
            <person name="Scott J.L."/>
            <person name="Geoghagen N.S.M."/>
            <person name="Weidman J.F."/>
            <person name="Fuhrmann J.L."/>
            <person name="Nguyen D."/>
            <person name="Utterback T.R."/>
            <person name="Kelley J.M."/>
            <person name="Peterson J.D."/>
            <person name="Sadow P.W."/>
            <person name="Hanna M.C."/>
            <person name="Cotton M.D."/>
            <person name="Roberts K.M."/>
            <person name="Hurst M.A."/>
            <person name="Kaine B.P."/>
            <person name="Borodovsky M."/>
            <person name="Klenk H.-P."/>
            <person name="Fraser C.M."/>
            <person name="Smith H.O."/>
            <person name="Woese C.R."/>
            <person name="Venter J.C."/>
        </authorList>
    </citation>
    <scope>NUCLEOTIDE SEQUENCE [LARGE SCALE GENOMIC DNA]</scope>
    <source>
        <strain>ATCC 43067 / DSM 2661 / JAL-1 / JCM 10045 / NBRC 100440</strain>
    </source>
</reference>
<reference key="2">
    <citation type="journal article" date="1998" name="Nature">
        <title>Crystal structure of the bacterial cell-division protein ftsZ.</title>
        <authorList>
            <person name="Loewe J."/>
            <person name="Amos L.A."/>
        </authorList>
    </citation>
    <scope>X-RAY CRYSTALLOGRAPHY (2.8 ANGSTROMS) IN COMPLEX WITH GDP</scope>
</reference>
<reference key="3">
    <citation type="journal article" date="1998" name="J. Struct. Biol.">
        <title>Crystal structure determination of FtsZ from Methanococcus jannaschii.</title>
        <authorList>
            <person name="Loewe J."/>
        </authorList>
    </citation>
    <scope>X-RAY CRYSTALLOGRAPHY (2.8 ANGSTROMS) OF 23-356</scope>
    <source>
        <strain>ATCC 43067 / DSM 2661 / JAL-1 / JCM 10045 / NBRC 100440</strain>
    </source>
</reference>
<reference key="4">
    <citation type="journal article" date="2004" name="Nat. Struct. Mol. Biol.">
        <title>Structural insights into FtsZ protofilament formation.</title>
        <authorList>
            <person name="Oliva M.A."/>
            <person name="Cordell S.C."/>
            <person name="Lowe J."/>
        </authorList>
    </citation>
    <scope>X-RAY CRYSTALLOGRAPHY (2.20 ANGSTROMS) IN COMPLEX WITH GTP</scope>
    <scope>SUBUNIT</scope>
</reference>
<reference key="5">
    <citation type="journal article" date="2007" name="J. Mol. Biol.">
        <title>Structural insights into the conformational variability of FtsZ.</title>
        <authorList>
            <person name="Oliva M.A."/>
            <person name="Trambaiolo D."/>
            <person name="Lowe J."/>
        </authorList>
    </citation>
    <scope>X-RAY CRYSTALLOGRAPHY (1.7 ANGSTROMS) IN COMPLEX WITH GDP</scope>
</reference>
<name>FTSZ1_METJA</name>
<comment type="function">
    <text evidence="1">Essential cell division protein that forms a contractile ring structure (Z ring) at the future cell division site. The regulation of the ring assembly controls the timing and the location of cell division. One of the functions of the FtsZ ring is to recruit other cell division proteins to the septum to produce a new cell wall between the dividing cells. Binds GTP and shows GTPase activity.</text>
</comment>
<comment type="subunit">
    <text evidence="1 2">Homodimer (PubMed:15558053). Polymerizes to form a dynamic ring structure in a strictly GTP-dependent manner. Interacts directly with several other division proteins (By similarity).</text>
</comment>
<comment type="subcellular location">
    <subcellularLocation>
        <location evidence="1">Cytoplasm</location>
    </subcellularLocation>
    <text evidence="1">Assembles at midcell at the inner surface of the cytoplasmic membrane.</text>
</comment>
<comment type="similarity">
    <text evidence="1">Belongs to the FtsZ family.</text>
</comment>
<keyword id="KW-0002">3D-structure</keyword>
<keyword id="KW-0131">Cell cycle</keyword>
<keyword id="KW-0132">Cell division</keyword>
<keyword id="KW-0963">Cytoplasm</keyword>
<keyword id="KW-0342">GTP-binding</keyword>
<keyword id="KW-0547">Nucleotide-binding</keyword>
<keyword id="KW-1185">Reference proteome</keyword>
<keyword id="KW-0717">Septation</keyword>
<organism>
    <name type="scientific">Methanocaldococcus jannaschii (strain ATCC 43067 / DSM 2661 / JAL-1 / JCM 10045 / NBRC 100440)</name>
    <name type="common">Methanococcus jannaschii</name>
    <dbReference type="NCBI Taxonomy" id="243232"/>
    <lineage>
        <taxon>Archaea</taxon>
        <taxon>Methanobacteriati</taxon>
        <taxon>Methanobacteriota</taxon>
        <taxon>Methanomada group</taxon>
        <taxon>Methanococci</taxon>
        <taxon>Methanococcales</taxon>
        <taxon>Methanocaldococcaceae</taxon>
        <taxon>Methanocaldococcus</taxon>
    </lineage>
</organism>
<gene>
    <name evidence="1" type="primary">ftsZ1</name>
    <name type="ordered locus">MJ0370</name>
</gene>
<sequence>MKFLKNVLEEGSKLEEFNELELSPEDKELLEYLQQTKAKITVVGCGGAGNNTITRLKMEGIEGAKTVAINTDAQQLIRTKADKKILIGKKLTRGLGAGGNPKIGEEAAKESAEEIKAAIQDSDMVFITCGLGGGTGTGSAPVVAEISKKIGALTVAVVTLPFVMEGKVRMKNAMEGLERLKQHTDTLVVIPNEKLFEIVPNMPLKLAFKVADEVLINAVKGLVELITKDGLINVDFADVKAVMNNGGLAMIGIGESDSEKRAKEAVSMALNSPLLDVDIDGATGALIHVMGPEDLTLEEAREVVATVSSRLDPNATIIWGATIDENLENTVRVLLVITGVQSRIEFTDTGLKRKKLELTGIPKI</sequence>
<protein>
    <recommendedName>
        <fullName evidence="1">Cell division protein FtsZ 1</fullName>
    </recommendedName>
</protein>
<feature type="chain" id="PRO_0000114401" description="Cell division protein FtsZ 1">
    <location>
        <begin position="1"/>
        <end position="364"/>
    </location>
</feature>
<feature type="binding site" evidence="2 3 4">
    <location>
        <begin position="47"/>
        <end position="48"/>
    </location>
    <ligand>
        <name>GTP</name>
        <dbReference type="ChEBI" id="CHEBI:37565"/>
    </ligand>
</feature>
<feature type="binding site" evidence="2">
    <location>
        <begin position="97"/>
        <end position="99"/>
    </location>
    <ligand>
        <name>GTP</name>
        <dbReference type="ChEBI" id="CHEBI:37565"/>
    </ligand>
</feature>
<feature type="binding site" evidence="1 2 3 4">
    <location>
        <begin position="134"/>
        <end position="136"/>
    </location>
    <ligand>
        <name>GTP</name>
        <dbReference type="ChEBI" id="CHEBI:37565"/>
    </ligand>
</feature>
<feature type="binding site" evidence="1 2 3 4">
    <location>
        <position position="165"/>
    </location>
    <ligand>
        <name>GTP</name>
        <dbReference type="ChEBI" id="CHEBI:37565"/>
    </ligand>
</feature>
<feature type="binding site" evidence="1 2 4">
    <location>
        <position position="169"/>
    </location>
    <ligand>
        <name>GTP</name>
        <dbReference type="ChEBI" id="CHEBI:37565"/>
    </ligand>
</feature>
<feature type="binding site" evidence="1 2 3 4">
    <location>
        <position position="212"/>
    </location>
    <ligand>
        <name>GTP</name>
        <dbReference type="ChEBI" id="CHEBI:37565"/>
    </ligand>
</feature>
<feature type="helix" evidence="6">
    <location>
        <begin position="4"/>
        <end position="16"/>
    </location>
</feature>
<feature type="helix" evidence="8">
    <location>
        <begin position="24"/>
        <end position="34"/>
    </location>
</feature>
<feature type="strand" evidence="8">
    <location>
        <begin position="40"/>
        <end position="45"/>
    </location>
</feature>
<feature type="helix" evidence="8">
    <location>
        <begin position="46"/>
        <end position="59"/>
    </location>
</feature>
<feature type="strand" evidence="8">
    <location>
        <begin position="64"/>
        <end position="72"/>
    </location>
</feature>
<feature type="helix" evidence="8">
    <location>
        <begin position="73"/>
        <end position="77"/>
    </location>
</feature>
<feature type="strand" evidence="8">
    <location>
        <begin position="82"/>
        <end position="86"/>
    </location>
</feature>
<feature type="turn" evidence="8">
    <location>
        <begin position="89"/>
        <end position="91"/>
    </location>
</feature>
<feature type="strand" evidence="6">
    <location>
        <begin position="93"/>
        <end position="95"/>
    </location>
</feature>
<feature type="helix" evidence="8">
    <location>
        <begin position="101"/>
        <end position="110"/>
    </location>
</feature>
<feature type="helix" evidence="8">
    <location>
        <begin position="112"/>
        <end position="119"/>
    </location>
</feature>
<feature type="strand" evidence="8">
    <location>
        <begin position="123"/>
        <end position="130"/>
    </location>
</feature>
<feature type="helix" evidence="8">
    <location>
        <begin position="135"/>
        <end position="149"/>
    </location>
</feature>
<feature type="strand" evidence="8">
    <location>
        <begin position="153"/>
        <end position="160"/>
    </location>
</feature>
<feature type="helix" evidence="8">
    <location>
        <begin position="163"/>
        <end position="165"/>
    </location>
</feature>
<feature type="helix" evidence="8">
    <location>
        <begin position="167"/>
        <end position="181"/>
    </location>
</feature>
<feature type="strand" evidence="8">
    <location>
        <begin position="185"/>
        <end position="191"/>
    </location>
</feature>
<feature type="helix" evidence="8">
    <location>
        <begin position="192"/>
        <end position="194"/>
    </location>
</feature>
<feature type="helix" evidence="8">
    <location>
        <begin position="195"/>
        <end position="198"/>
    </location>
</feature>
<feature type="strand" evidence="5">
    <location>
        <begin position="199"/>
        <end position="201"/>
    </location>
</feature>
<feature type="helix" evidence="8">
    <location>
        <begin position="204"/>
        <end position="227"/>
    </location>
</feature>
<feature type="helix" evidence="8">
    <location>
        <begin position="236"/>
        <end position="243"/>
    </location>
</feature>
<feature type="strand" evidence="8">
    <location>
        <begin position="247"/>
        <end position="256"/>
    </location>
</feature>
<feature type="strand" evidence="5">
    <location>
        <begin position="258"/>
        <end position="260"/>
    </location>
</feature>
<feature type="helix" evidence="8">
    <location>
        <begin position="261"/>
        <end position="270"/>
    </location>
</feature>
<feature type="helix" evidence="8">
    <location>
        <begin position="279"/>
        <end position="281"/>
    </location>
</feature>
<feature type="strand" evidence="8">
    <location>
        <begin position="284"/>
        <end position="291"/>
    </location>
</feature>
<feature type="helix" evidence="8">
    <location>
        <begin position="297"/>
        <end position="310"/>
    </location>
</feature>
<feature type="strand" evidence="8">
    <location>
        <begin position="316"/>
        <end position="323"/>
    </location>
</feature>
<feature type="turn" evidence="7">
    <location>
        <begin position="326"/>
        <end position="329"/>
    </location>
</feature>
<feature type="strand" evidence="8">
    <location>
        <begin position="331"/>
        <end position="338"/>
    </location>
</feature>
<feature type="helix" evidence="8">
    <location>
        <begin position="341"/>
        <end position="343"/>
    </location>
</feature>
<feature type="strand" evidence="8">
    <location>
        <begin position="344"/>
        <end position="347"/>
    </location>
</feature>
<feature type="strand" evidence="8">
    <location>
        <begin position="350"/>
        <end position="353"/>
    </location>
</feature>
<proteinExistence type="evidence at protein level"/>
<accession>Q57816</accession>
<dbReference type="EMBL" id="L77117">
    <property type="protein sequence ID" value="AAB98359.1"/>
    <property type="molecule type" value="Genomic_DNA"/>
</dbReference>
<dbReference type="PIR" id="B64346">
    <property type="entry name" value="B64346"/>
</dbReference>
<dbReference type="RefSeq" id="WP_010869869.1">
    <property type="nucleotide sequence ID" value="NC_000909.1"/>
</dbReference>
<dbReference type="PDB" id="1FSZ">
    <property type="method" value="X-ray"/>
    <property type="resolution" value="2.80 A"/>
    <property type="chains" value="A=1-364"/>
</dbReference>
<dbReference type="PDB" id="1W58">
    <property type="method" value="X-ray"/>
    <property type="resolution" value="2.50 A"/>
    <property type="chains" value="1=1-364"/>
</dbReference>
<dbReference type="PDB" id="1W59">
    <property type="method" value="X-ray"/>
    <property type="resolution" value="2.70 A"/>
    <property type="chains" value="A/B=1-364"/>
</dbReference>
<dbReference type="PDB" id="1W5A">
    <property type="method" value="X-ray"/>
    <property type="resolution" value="2.40 A"/>
    <property type="chains" value="A/B=1-364"/>
</dbReference>
<dbReference type="PDB" id="1W5B">
    <property type="method" value="X-ray"/>
    <property type="resolution" value="2.20 A"/>
    <property type="chains" value="A/B=1-364"/>
</dbReference>
<dbReference type="PDB" id="1W5E">
    <property type="method" value="X-ray"/>
    <property type="resolution" value="3.00 A"/>
    <property type="chains" value="A/B/C/D/E/F/G/H/I=1-364"/>
</dbReference>
<dbReference type="PDB" id="2VAP">
    <property type="method" value="X-ray"/>
    <property type="resolution" value="1.70 A"/>
    <property type="chains" value="A=1-364"/>
</dbReference>
<dbReference type="PDBsum" id="1FSZ"/>
<dbReference type="PDBsum" id="1W58"/>
<dbReference type="PDBsum" id="1W59"/>
<dbReference type="PDBsum" id="1W5A"/>
<dbReference type="PDBsum" id="1W5B"/>
<dbReference type="PDBsum" id="1W5E"/>
<dbReference type="PDBsum" id="2VAP"/>
<dbReference type="SMR" id="Q57816"/>
<dbReference type="FunCoup" id="Q57816">
    <property type="interactions" value="80"/>
</dbReference>
<dbReference type="STRING" id="243232.MJ_0370"/>
<dbReference type="PaxDb" id="243232-MJ_0370"/>
<dbReference type="EnsemblBacteria" id="AAB98359">
    <property type="protein sequence ID" value="AAB98359"/>
    <property type="gene ID" value="MJ_0370"/>
</dbReference>
<dbReference type="GeneID" id="1451227"/>
<dbReference type="KEGG" id="mja:MJ_0370"/>
<dbReference type="eggNOG" id="arCOG02201">
    <property type="taxonomic scope" value="Archaea"/>
</dbReference>
<dbReference type="HOGENOM" id="CLU_024865_0_1_2"/>
<dbReference type="InParanoid" id="Q57816"/>
<dbReference type="OrthoDB" id="371908at2157"/>
<dbReference type="PhylomeDB" id="Q57816"/>
<dbReference type="BRENDA" id="3.6.5.6">
    <property type="organism ID" value="3260"/>
</dbReference>
<dbReference type="EvolutionaryTrace" id="Q57816"/>
<dbReference type="Proteomes" id="UP000000805">
    <property type="component" value="Chromosome"/>
</dbReference>
<dbReference type="GO" id="GO:0032153">
    <property type="term" value="C:cell division site"/>
    <property type="evidence" value="ECO:0000318"/>
    <property type="project" value="GO_Central"/>
</dbReference>
<dbReference type="GO" id="GO:0005737">
    <property type="term" value="C:cytoplasm"/>
    <property type="evidence" value="ECO:0000318"/>
    <property type="project" value="GO_Central"/>
</dbReference>
<dbReference type="GO" id="GO:0005525">
    <property type="term" value="F:GTP binding"/>
    <property type="evidence" value="ECO:0000318"/>
    <property type="project" value="GO_Central"/>
</dbReference>
<dbReference type="GO" id="GO:0003924">
    <property type="term" value="F:GTPase activity"/>
    <property type="evidence" value="ECO:0000318"/>
    <property type="project" value="GO_Central"/>
</dbReference>
<dbReference type="GO" id="GO:0051301">
    <property type="term" value="P:cell division"/>
    <property type="evidence" value="ECO:0000318"/>
    <property type="project" value="GO_Central"/>
</dbReference>
<dbReference type="GO" id="GO:0043093">
    <property type="term" value="P:FtsZ-dependent cytokinesis"/>
    <property type="evidence" value="ECO:0007669"/>
    <property type="project" value="UniProtKB-UniRule"/>
</dbReference>
<dbReference type="GO" id="GO:0051258">
    <property type="term" value="P:protein polymerization"/>
    <property type="evidence" value="ECO:0007669"/>
    <property type="project" value="UniProtKB-UniRule"/>
</dbReference>
<dbReference type="CDD" id="cd02201">
    <property type="entry name" value="FtsZ_type1"/>
    <property type="match status" value="1"/>
</dbReference>
<dbReference type="FunFam" id="3.30.1330.20:FF:000008">
    <property type="entry name" value="Cell division protein FtsZ"/>
    <property type="match status" value="1"/>
</dbReference>
<dbReference type="FunFam" id="3.40.50.1440:FF:000023">
    <property type="entry name" value="Cell division protein FtsZ"/>
    <property type="match status" value="1"/>
</dbReference>
<dbReference type="Gene3D" id="1.10.287.1110">
    <property type="entry name" value="Tubulin, GTPase"/>
    <property type="match status" value="1"/>
</dbReference>
<dbReference type="Gene3D" id="3.30.1330.20">
    <property type="entry name" value="Tubulin/FtsZ, C-terminal domain"/>
    <property type="match status" value="1"/>
</dbReference>
<dbReference type="Gene3D" id="3.40.50.1440">
    <property type="entry name" value="Tubulin/FtsZ, GTPase domain"/>
    <property type="match status" value="1"/>
</dbReference>
<dbReference type="HAMAP" id="MF_00909">
    <property type="entry name" value="FtsZ"/>
    <property type="match status" value="1"/>
</dbReference>
<dbReference type="InterPro" id="IPR000158">
    <property type="entry name" value="Cell_div_FtsZ"/>
</dbReference>
<dbReference type="InterPro" id="IPR020805">
    <property type="entry name" value="Cell_div_FtsZ_CS"/>
</dbReference>
<dbReference type="InterPro" id="IPR045061">
    <property type="entry name" value="FtsZ/CetZ"/>
</dbReference>
<dbReference type="InterPro" id="IPR024757">
    <property type="entry name" value="FtsZ_C"/>
</dbReference>
<dbReference type="InterPro" id="IPR008280">
    <property type="entry name" value="Tub_FtsZ_C"/>
</dbReference>
<dbReference type="InterPro" id="IPR037103">
    <property type="entry name" value="Tubulin/FtsZ-like_C"/>
</dbReference>
<dbReference type="InterPro" id="IPR018316">
    <property type="entry name" value="Tubulin/FtsZ_2-layer-sand-dom"/>
</dbReference>
<dbReference type="InterPro" id="IPR036525">
    <property type="entry name" value="Tubulin/FtsZ_GTPase_sf"/>
</dbReference>
<dbReference type="InterPro" id="IPR003008">
    <property type="entry name" value="Tubulin_FtsZ_GTPase"/>
</dbReference>
<dbReference type="NCBIfam" id="TIGR00065">
    <property type="entry name" value="ftsZ"/>
    <property type="match status" value="1"/>
</dbReference>
<dbReference type="PANTHER" id="PTHR30314">
    <property type="entry name" value="CELL DIVISION PROTEIN FTSZ-RELATED"/>
    <property type="match status" value="1"/>
</dbReference>
<dbReference type="PANTHER" id="PTHR30314:SF3">
    <property type="entry name" value="MITOCHONDRIAL DIVISION PROTEIN FSZA"/>
    <property type="match status" value="1"/>
</dbReference>
<dbReference type="Pfam" id="PF12327">
    <property type="entry name" value="FtsZ_C"/>
    <property type="match status" value="1"/>
</dbReference>
<dbReference type="Pfam" id="PF00091">
    <property type="entry name" value="Tubulin"/>
    <property type="match status" value="1"/>
</dbReference>
<dbReference type="PRINTS" id="PR00423">
    <property type="entry name" value="CELLDVISFTSZ"/>
</dbReference>
<dbReference type="SMART" id="SM00864">
    <property type="entry name" value="Tubulin"/>
    <property type="match status" value="1"/>
</dbReference>
<dbReference type="SMART" id="SM00865">
    <property type="entry name" value="Tubulin_C"/>
    <property type="match status" value="1"/>
</dbReference>
<dbReference type="SUPFAM" id="SSF55307">
    <property type="entry name" value="Tubulin C-terminal domain-like"/>
    <property type="match status" value="1"/>
</dbReference>
<dbReference type="SUPFAM" id="SSF52490">
    <property type="entry name" value="Tubulin nucleotide-binding domain-like"/>
    <property type="match status" value="1"/>
</dbReference>
<dbReference type="PROSITE" id="PS01134">
    <property type="entry name" value="FTSZ_1"/>
    <property type="match status" value="1"/>
</dbReference>
<dbReference type="PROSITE" id="PS01135">
    <property type="entry name" value="FTSZ_2"/>
    <property type="match status" value="1"/>
</dbReference>